<organism>
    <name type="scientific">Haemophilus influenzae (strain ATCC 51907 / DSM 11121 / KW20 / Rd)</name>
    <dbReference type="NCBI Taxonomy" id="71421"/>
    <lineage>
        <taxon>Bacteria</taxon>
        <taxon>Pseudomonadati</taxon>
        <taxon>Pseudomonadota</taxon>
        <taxon>Gammaproteobacteria</taxon>
        <taxon>Pasteurellales</taxon>
        <taxon>Pasteurellaceae</taxon>
        <taxon>Haemophilus</taxon>
    </lineage>
</organism>
<gene>
    <name evidence="3" type="primary">licC</name>
    <name evidence="6" type="ordered locus">HI_1539</name>
</gene>
<name>LICC_HAEIN</name>
<proteinExistence type="inferred from homology"/>
<sequence>MNAIILAAGLGSRFKDITQSTHKSLLDIHGTPNLERTLTFLRQANIDNIVIVTGYLHEQFEYLKKKYDCTLIYNEKYREYNSIYSFSLAQDFFNDCYVIDADVVLNRNIFLTKPSHSKYFTVIRSKTHNEWLPILNSNGQVIRIDIGSLNQPSLSGISFWTTQDCNIILTLLKEYTSEVRLKNPKLYWDTIPMEYIEKLNIYTEQLNSDDIFEMDNLDDYHHILQKLTPNKEK</sequence>
<reference key="1">
    <citation type="journal article" date="1989" name="Cell">
        <title>The molecular mechanism of phase variation of H. influenzae lipopolysaccharide.</title>
        <authorList>
            <person name="Weiser J.N."/>
            <person name="Love J.M."/>
            <person name="Moxon E.R."/>
        </authorList>
    </citation>
    <scope>NUCLEOTIDE SEQUENCE [GENOMIC DNA]</scope>
    <scope>FUNCTION</scope>
    <source>
        <strain>RM 7004 / Serotype B</strain>
    </source>
</reference>
<reference key="2">
    <citation type="journal article" date="1995" name="Science">
        <title>Whole-genome random sequencing and assembly of Haemophilus influenzae Rd.</title>
        <authorList>
            <person name="Fleischmann R.D."/>
            <person name="Adams M.D."/>
            <person name="White O."/>
            <person name="Clayton R.A."/>
            <person name="Kirkness E.F."/>
            <person name="Kerlavage A.R."/>
            <person name="Bult C.J."/>
            <person name="Tomb J.-F."/>
            <person name="Dougherty B.A."/>
            <person name="Merrick J.M."/>
            <person name="McKenney K."/>
            <person name="Sutton G.G."/>
            <person name="FitzHugh W."/>
            <person name="Fields C.A."/>
            <person name="Gocayne J.D."/>
            <person name="Scott J.D."/>
            <person name="Shirley R."/>
            <person name="Liu L.-I."/>
            <person name="Glodek A."/>
            <person name="Kelley J.M."/>
            <person name="Weidman J.F."/>
            <person name="Phillips C.A."/>
            <person name="Spriggs T."/>
            <person name="Hedblom E."/>
            <person name="Cotton M.D."/>
            <person name="Utterback T.R."/>
            <person name="Hanna M.C."/>
            <person name="Nguyen D.T."/>
            <person name="Saudek D.M."/>
            <person name="Brandon R.C."/>
            <person name="Fine L.D."/>
            <person name="Fritchman J.L."/>
            <person name="Fuhrmann J.L."/>
            <person name="Geoghagen N.S.M."/>
            <person name="Gnehm C.L."/>
            <person name="McDonald L.A."/>
            <person name="Small K.V."/>
            <person name="Fraser C.M."/>
            <person name="Smith H.O."/>
            <person name="Venter J.C."/>
        </authorList>
    </citation>
    <scope>NUCLEOTIDE SEQUENCE [LARGE SCALE GENOMIC DNA]</scope>
    <source>
        <strain>ATCC 51907 / DSM 11121 / KW20 / Rd</strain>
    </source>
</reference>
<comment type="function">
    <text evidence="1 2">Cytidylyltransferase involved in the biosynthesis of lipopolysaccharides (LPS), a necessary component and antigenic determinant of the outer membrane that has been shown to be an important factor in the host-parasite interaction in a number of Gram-negative species (PubMed:2479481). Catalyzes the activation of phosphocholine (P-Cho) to CDP-choline (CDP-Cho) (By similarity). LicC is critical for the expression of the 6A2-specific epitope (PubMed:2479481).</text>
</comment>
<comment type="catalytic activity">
    <reaction evidence="1">
        <text>phosphocholine + CTP + H(+) = CDP-choline + diphosphate</text>
        <dbReference type="Rhea" id="RHEA:18997"/>
        <dbReference type="ChEBI" id="CHEBI:15378"/>
        <dbReference type="ChEBI" id="CHEBI:33019"/>
        <dbReference type="ChEBI" id="CHEBI:37563"/>
        <dbReference type="ChEBI" id="CHEBI:58779"/>
        <dbReference type="ChEBI" id="CHEBI:295975"/>
        <dbReference type="EC" id="2.7.7.15"/>
    </reaction>
    <physiologicalReaction direction="left-to-right" evidence="1">
        <dbReference type="Rhea" id="RHEA:18998"/>
    </physiologicalReaction>
</comment>
<comment type="cofactor">
    <cofactor evidence="1">
        <name>Mg(2+)</name>
        <dbReference type="ChEBI" id="CHEBI:18420"/>
    </cofactor>
</comment>
<comment type="pathway">
    <text evidence="5">Lipopolysaccharide biosynthesis.</text>
</comment>
<comment type="similarity">
    <text evidence="4">Belongs to the LicC/PntC cytidylyltransferase family.</text>
</comment>
<feature type="chain" id="PRO_0000084418" description="Choline-phosphate cytidylyltransferase">
    <location>
        <begin position="1"/>
        <end position="233"/>
    </location>
</feature>
<feature type="binding site" evidence="1">
    <location>
        <position position="6"/>
    </location>
    <ligand>
        <name>CDP-choline</name>
        <dbReference type="ChEBI" id="CHEBI:58779"/>
    </ligand>
</feature>
<feature type="binding site" evidence="1">
    <location>
        <position position="8"/>
    </location>
    <ligand>
        <name>CDP-choline</name>
        <dbReference type="ChEBI" id="CHEBI:58779"/>
    </ligand>
</feature>
<feature type="binding site" evidence="1">
    <location>
        <position position="9"/>
    </location>
    <ligand>
        <name>CDP-choline</name>
        <dbReference type="ChEBI" id="CHEBI:58779"/>
    </ligand>
</feature>
<feature type="binding site" evidence="1">
    <location>
        <position position="80"/>
    </location>
    <ligand>
        <name>CDP-choline</name>
        <dbReference type="ChEBI" id="CHEBI:58779"/>
    </ligand>
</feature>
<feature type="binding site" evidence="1">
    <location>
        <position position="85"/>
    </location>
    <ligand>
        <name>CDP-choline</name>
        <dbReference type="ChEBI" id="CHEBI:58779"/>
    </ligand>
</feature>
<feature type="binding site" evidence="1">
    <location>
        <position position="101"/>
    </location>
    <ligand>
        <name>CDP-choline</name>
        <dbReference type="ChEBI" id="CHEBI:58779"/>
    </ligand>
</feature>
<feature type="binding site" evidence="1">
    <location>
        <position position="102"/>
    </location>
    <ligand>
        <name>Mg(2+)</name>
        <dbReference type="ChEBI" id="CHEBI:18420"/>
    </ligand>
</feature>
<feature type="binding site" evidence="1">
    <location>
        <position position="187"/>
    </location>
    <ligand>
        <name>CDP-choline</name>
        <dbReference type="ChEBI" id="CHEBI:58779"/>
    </ligand>
</feature>
<feature type="binding site" evidence="1">
    <location>
        <position position="213"/>
    </location>
    <ligand>
        <name>Mg(2+)</name>
        <dbReference type="ChEBI" id="CHEBI:18420"/>
    </ligand>
</feature>
<feature type="binding site" evidence="1">
    <location>
        <position position="215"/>
    </location>
    <ligand>
        <name>Mg(2+)</name>
        <dbReference type="ChEBI" id="CHEBI:18420"/>
    </ligand>
</feature>
<feature type="sequence conflict" description="In Ref. 1; AAA24973." evidence="4" ref="1">
    <original>K</original>
    <variation>R</variation>
    <location>
        <position position="118"/>
    </location>
</feature>
<feature type="sequence conflict" description="In Ref. 1; AAA24973." evidence="4" ref="1">
    <original>I</original>
    <variation>M</variation>
    <location>
        <position position="142"/>
    </location>
</feature>
<feature type="sequence conflict" description="In Ref. 1; AAA24973." evidence="4" ref="1">
    <original>D</original>
    <variation>E</variation>
    <location>
        <position position="145"/>
    </location>
</feature>
<feature type="sequence conflict" description="In Ref. 1; AAA24973." evidence="4" ref="1">
    <original>ISF</original>
    <variation>VSY</variation>
    <location>
        <begin position="157"/>
        <end position="159"/>
    </location>
</feature>
<feature type="sequence conflict" description="In Ref. 1; AAA24973." evidence="4" ref="1">
    <original>Q</original>
    <variation>R</variation>
    <location>
        <position position="163"/>
    </location>
</feature>
<feature type="sequence conflict" description="In Ref. 1; AAA24973." evidence="4" ref="1">
    <original>KLNIYTEQLNSDDIFEMDNLDDYHHILQKLTPNKEK</original>
    <variation>N</variation>
    <location>
        <begin position="198"/>
        <end position="233"/>
    </location>
</feature>
<accession>P14183</accession>
<accession>O05076</accession>
<evidence type="ECO:0000250" key="1">
    <source>
        <dbReference type="UniProtKB" id="Q8DPI6"/>
    </source>
</evidence>
<evidence type="ECO:0000269" key="2">
    <source>
    </source>
</evidence>
<evidence type="ECO:0000303" key="3">
    <source>
    </source>
</evidence>
<evidence type="ECO:0000305" key="4"/>
<evidence type="ECO:0000305" key="5">
    <source>
    </source>
</evidence>
<evidence type="ECO:0000312" key="6">
    <source>
        <dbReference type="EMBL" id="AAC23189.1"/>
    </source>
</evidence>
<protein>
    <recommendedName>
        <fullName evidence="1">Choline-phosphate cytidylyltransferase</fullName>
        <ecNumber evidence="1">2.7.7.15</ecNumber>
    </recommendedName>
    <alternativeName>
        <fullName evidence="1">CTP:phosphocholine cytidylyltransferase</fullName>
        <shortName evidence="1">CCT</shortName>
    </alternativeName>
</protein>
<dbReference type="EC" id="2.7.7.15" evidence="1"/>
<dbReference type="EMBL" id="M27280">
    <property type="protein sequence ID" value="AAA24973.1"/>
    <property type="molecule type" value="Genomic_DNA"/>
</dbReference>
<dbReference type="EMBL" id="L42023">
    <property type="protein sequence ID" value="AAC23189.1"/>
    <property type="molecule type" value="Genomic_DNA"/>
</dbReference>
<dbReference type="PIR" id="C33465">
    <property type="entry name" value="C33465"/>
</dbReference>
<dbReference type="PIR" id="D64128">
    <property type="entry name" value="D64128"/>
</dbReference>
<dbReference type="RefSeq" id="NP_439688.1">
    <property type="nucleotide sequence ID" value="NC_000907.1"/>
</dbReference>
<dbReference type="SMR" id="P14183"/>
<dbReference type="STRING" id="71421.HI_1539"/>
<dbReference type="EnsemblBacteria" id="AAC23189">
    <property type="protein sequence ID" value="AAC23189"/>
    <property type="gene ID" value="HI_1539"/>
</dbReference>
<dbReference type="KEGG" id="hin:HI_1539"/>
<dbReference type="PATRIC" id="fig|71421.8.peg.1610"/>
<dbReference type="eggNOG" id="COG4750">
    <property type="taxonomic scope" value="Bacteria"/>
</dbReference>
<dbReference type="HOGENOM" id="CLU_029499_5_2_6"/>
<dbReference type="OrthoDB" id="9803871at2"/>
<dbReference type="PhylomeDB" id="P14183"/>
<dbReference type="BioCyc" id="HINF71421:G1GJ1-1559-MONOMER"/>
<dbReference type="Proteomes" id="UP000000579">
    <property type="component" value="Chromosome"/>
</dbReference>
<dbReference type="GO" id="GO:0046872">
    <property type="term" value="F:metal ion binding"/>
    <property type="evidence" value="ECO:0007669"/>
    <property type="project" value="UniProtKB-KW"/>
</dbReference>
<dbReference type="GO" id="GO:0016779">
    <property type="term" value="F:nucleotidyltransferase activity"/>
    <property type="evidence" value="ECO:0007669"/>
    <property type="project" value="UniProtKB-KW"/>
</dbReference>
<dbReference type="GO" id="GO:0009103">
    <property type="term" value="P:lipopolysaccharide biosynthetic process"/>
    <property type="evidence" value="ECO:0007669"/>
    <property type="project" value="UniProtKB-KW"/>
</dbReference>
<dbReference type="CDD" id="cd02523">
    <property type="entry name" value="PC_cytidylyltransferase"/>
    <property type="match status" value="1"/>
</dbReference>
<dbReference type="Gene3D" id="3.90.550.10">
    <property type="entry name" value="Spore Coat Polysaccharide Biosynthesis Protein SpsA, Chain A"/>
    <property type="match status" value="1"/>
</dbReference>
<dbReference type="InterPro" id="IPR017189">
    <property type="entry name" value="CTP-phospocholine_CTT"/>
</dbReference>
<dbReference type="InterPro" id="IPR050065">
    <property type="entry name" value="GlmU-like"/>
</dbReference>
<dbReference type="InterPro" id="IPR025877">
    <property type="entry name" value="MobA-like_NTP_Trfase"/>
</dbReference>
<dbReference type="InterPro" id="IPR029044">
    <property type="entry name" value="Nucleotide-diphossugar_trans"/>
</dbReference>
<dbReference type="PANTHER" id="PTHR43584">
    <property type="entry name" value="NUCLEOTIDYL TRANSFERASE"/>
    <property type="match status" value="1"/>
</dbReference>
<dbReference type="PANTHER" id="PTHR43584:SF5">
    <property type="entry name" value="PROTEIN LICC"/>
    <property type="match status" value="1"/>
</dbReference>
<dbReference type="Pfam" id="PF12804">
    <property type="entry name" value="NTP_transf_3"/>
    <property type="match status" value="1"/>
</dbReference>
<dbReference type="PIRSF" id="PIRSF037382">
    <property type="entry name" value="CCT_LicC"/>
    <property type="match status" value="1"/>
</dbReference>
<dbReference type="SUPFAM" id="SSF53448">
    <property type="entry name" value="Nucleotide-diphospho-sugar transferases"/>
    <property type="match status" value="1"/>
</dbReference>
<keyword id="KW-0448">Lipopolysaccharide biosynthesis</keyword>
<keyword id="KW-0460">Magnesium</keyword>
<keyword id="KW-0479">Metal-binding</keyword>
<keyword id="KW-0548">Nucleotidyltransferase</keyword>
<keyword id="KW-1185">Reference proteome</keyword>
<keyword id="KW-0808">Transferase</keyword>